<gene>
    <name type="primary">ANKIB1</name>
    <name type="synonym">KIAA1386</name>
</gene>
<organism>
    <name type="scientific">Homo sapiens</name>
    <name type="common">Human</name>
    <dbReference type="NCBI Taxonomy" id="9606"/>
    <lineage>
        <taxon>Eukaryota</taxon>
        <taxon>Metazoa</taxon>
        <taxon>Chordata</taxon>
        <taxon>Craniata</taxon>
        <taxon>Vertebrata</taxon>
        <taxon>Euteleostomi</taxon>
        <taxon>Mammalia</taxon>
        <taxon>Eutheria</taxon>
        <taxon>Euarchontoglires</taxon>
        <taxon>Primates</taxon>
        <taxon>Haplorrhini</taxon>
        <taxon>Catarrhini</taxon>
        <taxon>Hominidae</taxon>
        <taxon>Homo</taxon>
    </lineage>
</organism>
<dbReference type="EC" id="2.3.2.31" evidence="2"/>
<dbReference type="EMBL" id="AB037807">
    <property type="protein sequence ID" value="BAA92624.1"/>
    <property type="status" value="ALT_INIT"/>
    <property type="molecule type" value="mRNA"/>
</dbReference>
<dbReference type="EMBL" id="AC000118">
    <property type="status" value="NOT_ANNOTATED_CDS"/>
    <property type="molecule type" value="Genomic_DNA"/>
</dbReference>
<dbReference type="EMBL" id="AC000120">
    <property type="status" value="NOT_ANNOTATED_CDS"/>
    <property type="molecule type" value="Genomic_DNA"/>
</dbReference>
<dbReference type="EMBL" id="AC004539">
    <property type="status" value="NOT_ANNOTATED_CDS"/>
    <property type="molecule type" value="Genomic_DNA"/>
</dbReference>
<dbReference type="EMBL" id="AC007566">
    <property type="status" value="NOT_ANNOTATED_CDS"/>
    <property type="molecule type" value="Genomic_DNA"/>
</dbReference>
<dbReference type="EMBL" id="BC063861">
    <property type="protein sequence ID" value="AAH63861.1"/>
    <property type="status" value="ALT_INIT"/>
    <property type="molecule type" value="mRNA"/>
</dbReference>
<dbReference type="EMBL" id="BC073893">
    <property type="protein sequence ID" value="AAH73893.1"/>
    <property type="molecule type" value="mRNA"/>
</dbReference>
<dbReference type="EMBL" id="AK001179">
    <property type="protein sequence ID" value="BAA91537.1"/>
    <property type="status" value="ALT_INIT"/>
    <property type="molecule type" value="mRNA"/>
</dbReference>
<dbReference type="EMBL" id="AL137349">
    <property type="protein sequence ID" value="CAB70704.1"/>
    <property type="molecule type" value="mRNA"/>
</dbReference>
<dbReference type="CCDS" id="CCDS47639.1"/>
<dbReference type="PIR" id="T46423">
    <property type="entry name" value="T46423"/>
</dbReference>
<dbReference type="RefSeq" id="NP_061877.1">
    <property type="nucleotide sequence ID" value="NM_019004.2"/>
</dbReference>
<dbReference type="SMR" id="Q9P2G1"/>
<dbReference type="BioGRID" id="119973">
    <property type="interactions" value="15"/>
</dbReference>
<dbReference type="ELM" id="Q9P2G1"/>
<dbReference type="FunCoup" id="Q9P2G1">
    <property type="interactions" value="1671"/>
</dbReference>
<dbReference type="IntAct" id="Q9P2G1">
    <property type="interactions" value="5"/>
</dbReference>
<dbReference type="MINT" id="Q9P2G1"/>
<dbReference type="STRING" id="9606.ENSP00000265742"/>
<dbReference type="GlyGen" id="Q9P2G1">
    <property type="glycosylation" value="2 sites, 1 N-linked glycan (1 site)"/>
</dbReference>
<dbReference type="iPTMnet" id="Q9P2G1"/>
<dbReference type="PhosphoSitePlus" id="Q9P2G1"/>
<dbReference type="BioMuta" id="ANKIB1"/>
<dbReference type="DMDM" id="158937428"/>
<dbReference type="jPOST" id="Q9P2G1"/>
<dbReference type="MassIVE" id="Q9P2G1"/>
<dbReference type="PaxDb" id="9606-ENSP00000265742"/>
<dbReference type="PeptideAtlas" id="Q9P2G1"/>
<dbReference type="ProteomicsDB" id="83810"/>
<dbReference type="Pumba" id="Q9P2G1"/>
<dbReference type="Antibodypedia" id="8661">
    <property type="antibodies" value="30 antibodies from 9 providers"/>
</dbReference>
<dbReference type="DNASU" id="54467"/>
<dbReference type="Ensembl" id="ENST00000265742.8">
    <property type="protein sequence ID" value="ENSP00000265742.3"/>
    <property type="gene ID" value="ENSG00000001629.10"/>
</dbReference>
<dbReference type="GeneID" id="54467"/>
<dbReference type="KEGG" id="hsa:54467"/>
<dbReference type="MANE-Select" id="ENST00000265742.8">
    <property type="protein sequence ID" value="ENSP00000265742.3"/>
    <property type="RefSeq nucleotide sequence ID" value="NM_019004.2"/>
    <property type="RefSeq protein sequence ID" value="NP_061877.1"/>
</dbReference>
<dbReference type="UCSC" id="uc003ulw.2">
    <property type="organism name" value="human"/>
</dbReference>
<dbReference type="AGR" id="HGNC:22215"/>
<dbReference type="CTD" id="54467"/>
<dbReference type="DisGeNET" id="54467"/>
<dbReference type="GeneCards" id="ANKIB1"/>
<dbReference type="HGNC" id="HGNC:22215">
    <property type="gene designation" value="ANKIB1"/>
</dbReference>
<dbReference type="HPA" id="ENSG00000001629">
    <property type="expression patterns" value="Low tissue specificity"/>
</dbReference>
<dbReference type="MIM" id="620069">
    <property type="type" value="gene"/>
</dbReference>
<dbReference type="neXtProt" id="NX_Q9P2G1"/>
<dbReference type="OpenTargets" id="ENSG00000001629"/>
<dbReference type="PharmGKB" id="PA134941469"/>
<dbReference type="VEuPathDB" id="HostDB:ENSG00000001629"/>
<dbReference type="eggNOG" id="KOG1815">
    <property type="taxonomic scope" value="Eukaryota"/>
</dbReference>
<dbReference type="GeneTree" id="ENSGT00940000157621"/>
<dbReference type="HOGENOM" id="CLU_009823_1_0_1"/>
<dbReference type="InParanoid" id="Q9P2G1"/>
<dbReference type="OMA" id="CNPENCC"/>
<dbReference type="OrthoDB" id="69641at2759"/>
<dbReference type="PAN-GO" id="Q9P2G1">
    <property type="GO annotations" value="7 GO annotations based on evolutionary models"/>
</dbReference>
<dbReference type="PhylomeDB" id="Q9P2G1"/>
<dbReference type="TreeFam" id="TF331104"/>
<dbReference type="PathwayCommons" id="Q9P2G1"/>
<dbReference type="SignaLink" id="Q9P2G1"/>
<dbReference type="SIGNOR" id="Q9P2G1"/>
<dbReference type="BioGRID-ORCS" id="54467">
    <property type="hits" value="20 hits in 1198 CRISPR screens"/>
</dbReference>
<dbReference type="ChiTaRS" id="ANKIB1">
    <property type="organism name" value="human"/>
</dbReference>
<dbReference type="GenomeRNAi" id="54467"/>
<dbReference type="Pharos" id="Q9P2G1">
    <property type="development level" value="Tdark"/>
</dbReference>
<dbReference type="PRO" id="PR:Q9P2G1"/>
<dbReference type="Proteomes" id="UP000005640">
    <property type="component" value="Chromosome 7"/>
</dbReference>
<dbReference type="RNAct" id="Q9P2G1">
    <property type="molecule type" value="protein"/>
</dbReference>
<dbReference type="Bgee" id="ENSG00000001629">
    <property type="expression patterns" value="Expressed in corpus callosum and 189 other cell types or tissues"/>
</dbReference>
<dbReference type="ExpressionAtlas" id="Q9P2G1">
    <property type="expression patterns" value="baseline and differential"/>
</dbReference>
<dbReference type="GO" id="GO:0005737">
    <property type="term" value="C:cytoplasm"/>
    <property type="evidence" value="ECO:0000318"/>
    <property type="project" value="GO_Central"/>
</dbReference>
<dbReference type="GO" id="GO:0000151">
    <property type="term" value="C:ubiquitin ligase complex"/>
    <property type="evidence" value="ECO:0000318"/>
    <property type="project" value="GO_Central"/>
</dbReference>
<dbReference type="GO" id="GO:0031624">
    <property type="term" value="F:ubiquitin conjugating enzyme binding"/>
    <property type="evidence" value="ECO:0000318"/>
    <property type="project" value="GO_Central"/>
</dbReference>
<dbReference type="GO" id="GO:0061630">
    <property type="term" value="F:ubiquitin protein ligase activity"/>
    <property type="evidence" value="ECO:0000318"/>
    <property type="project" value="GO_Central"/>
</dbReference>
<dbReference type="GO" id="GO:0008270">
    <property type="term" value="F:zinc ion binding"/>
    <property type="evidence" value="ECO:0007669"/>
    <property type="project" value="UniProtKB-KW"/>
</dbReference>
<dbReference type="GO" id="GO:0016567">
    <property type="term" value="P:protein ubiquitination"/>
    <property type="evidence" value="ECO:0007669"/>
    <property type="project" value="InterPro"/>
</dbReference>
<dbReference type="GO" id="GO:0006511">
    <property type="term" value="P:ubiquitin-dependent protein catabolic process"/>
    <property type="evidence" value="ECO:0000318"/>
    <property type="project" value="GO_Central"/>
</dbReference>
<dbReference type="CDD" id="cd20346">
    <property type="entry name" value="BRcat_RBR_ANKIB1"/>
    <property type="match status" value="1"/>
</dbReference>
<dbReference type="CDD" id="cd20361">
    <property type="entry name" value="Rcat_RBR_ANKIB1"/>
    <property type="match status" value="1"/>
</dbReference>
<dbReference type="CDD" id="cd16774">
    <property type="entry name" value="RING-HC_RBR_ANKIB1"/>
    <property type="match status" value="1"/>
</dbReference>
<dbReference type="FunFam" id="1.20.120.1750:FF:000003">
    <property type="entry name" value="RBR-type E3 ubiquitin transferase"/>
    <property type="match status" value="1"/>
</dbReference>
<dbReference type="FunFam" id="1.25.40.20:FF:000040">
    <property type="entry name" value="RBR-type E3 ubiquitin transferase"/>
    <property type="match status" value="1"/>
</dbReference>
<dbReference type="FunFam" id="3.30.40.10:FF:000129">
    <property type="entry name" value="RBR-type E3 ubiquitin transferase"/>
    <property type="match status" value="1"/>
</dbReference>
<dbReference type="Gene3D" id="1.20.120.1750">
    <property type="match status" value="1"/>
</dbReference>
<dbReference type="Gene3D" id="1.25.40.20">
    <property type="entry name" value="Ankyrin repeat-containing domain"/>
    <property type="match status" value="1"/>
</dbReference>
<dbReference type="Gene3D" id="3.30.40.10">
    <property type="entry name" value="Zinc/RING finger domain, C3HC4 (zinc finger)"/>
    <property type="match status" value="1"/>
</dbReference>
<dbReference type="InterPro" id="IPR002110">
    <property type="entry name" value="Ankyrin_rpt"/>
</dbReference>
<dbReference type="InterPro" id="IPR036770">
    <property type="entry name" value="Ankyrin_rpt-contain_sf"/>
</dbReference>
<dbReference type="InterPro" id="IPR045840">
    <property type="entry name" value="Ariadne"/>
</dbReference>
<dbReference type="InterPro" id="IPR031127">
    <property type="entry name" value="E3_UB_ligase_RBR"/>
</dbReference>
<dbReference type="InterPro" id="IPR002867">
    <property type="entry name" value="IBR_dom"/>
</dbReference>
<dbReference type="InterPro" id="IPR047564">
    <property type="entry name" value="Rcat_RBR_ANKIB1"/>
</dbReference>
<dbReference type="InterPro" id="IPR047563">
    <property type="entry name" value="RING-HC_RBR_ANKIB1"/>
</dbReference>
<dbReference type="InterPro" id="IPR044066">
    <property type="entry name" value="TRIAD_supradom"/>
</dbReference>
<dbReference type="InterPro" id="IPR003903">
    <property type="entry name" value="UIM_dom"/>
</dbReference>
<dbReference type="InterPro" id="IPR001841">
    <property type="entry name" value="Znf_RING"/>
</dbReference>
<dbReference type="InterPro" id="IPR013083">
    <property type="entry name" value="Znf_RING/FYVE/PHD"/>
</dbReference>
<dbReference type="PANTHER" id="PTHR11685">
    <property type="entry name" value="RBR FAMILY RING FINGER AND IBR DOMAIN-CONTAINING"/>
    <property type="match status" value="1"/>
</dbReference>
<dbReference type="Pfam" id="PF00023">
    <property type="entry name" value="Ank"/>
    <property type="match status" value="1"/>
</dbReference>
<dbReference type="Pfam" id="PF12796">
    <property type="entry name" value="Ank_2"/>
    <property type="match status" value="1"/>
</dbReference>
<dbReference type="Pfam" id="PF19422">
    <property type="entry name" value="Ariadne"/>
    <property type="match status" value="1"/>
</dbReference>
<dbReference type="Pfam" id="PF01485">
    <property type="entry name" value="IBR"/>
    <property type="match status" value="1"/>
</dbReference>
<dbReference type="Pfam" id="PF22191">
    <property type="entry name" value="IBR_1"/>
    <property type="match status" value="1"/>
</dbReference>
<dbReference type="SMART" id="SM00248">
    <property type="entry name" value="ANK"/>
    <property type="match status" value="2"/>
</dbReference>
<dbReference type="SMART" id="SM00647">
    <property type="entry name" value="IBR"/>
    <property type="match status" value="2"/>
</dbReference>
<dbReference type="SMART" id="SM00184">
    <property type="entry name" value="RING"/>
    <property type="match status" value="2"/>
</dbReference>
<dbReference type="SUPFAM" id="SSF48403">
    <property type="entry name" value="Ankyrin repeat"/>
    <property type="match status" value="1"/>
</dbReference>
<dbReference type="SUPFAM" id="SSF57850">
    <property type="entry name" value="RING/U-box"/>
    <property type="match status" value="3"/>
</dbReference>
<dbReference type="PROSITE" id="PS50297">
    <property type="entry name" value="ANK_REP_REGION"/>
    <property type="match status" value="1"/>
</dbReference>
<dbReference type="PROSITE" id="PS50088">
    <property type="entry name" value="ANK_REPEAT"/>
    <property type="match status" value="2"/>
</dbReference>
<dbReference type="PROSITE" id="PS51873">
    <property type="entry name" value="TRIAD"/>
    <property type="match status" value="1"/>
</dbReference>
<dbReference type="PROSITE" id="PS50330">
    <property type="entry name" value="UIM"/>
    <property type="match status" value="1"/>
</dbReference>
<dbReference type="PROSITE" id="PS50089">
    <property type="entry name" value="ZF_RING_2"/>
    <property type="match status" value="1"/>
</dbReference>
<accession>Q9P2G1</accession>
<accession>Q6GMS4</accession>
<accession>Q6P3S9</accession>
<accession>Q9NTD7</accession>
<accession>Q9NW49</accession>
<protein>
    <recommendedName>
        <fullName>Ankyrin repeat and IBR domain-containing protein 1</fullName>
        <ecNumber evidence="2">2.3.2.31</ecNumber>
    </recommendedName>
</protein>
<proteinExistence type="evidence at protein level"/>
<comment type="function">
    <text evidence="1">Might act as an E3 ubiquitin-protein ligase, or as part of E3 complex, which accepts ubiquitin from specific E2 ubiquitin-conjugating enzymes and then transfers it to substrates.</text>
</comment>
<comment type="catalytic activity">
    <reaction evidence="2">
        <text>[E2 ubiquitin-conjugating enzyme]-S-ubiquitinyl-L-cysteine + [acceptor protein]-L-lysine = [E2 ubiquitin-conjugating enzyme]-L-cysteine + [acceptor protein]-N(6)-ubiquitinyl-L-lysine.</text>
        <dbReference type="EC" id="2.3.2.31"/>
    </reaction>
</comment>
<comment type="interaction">
    <interactant intactId="EBI-2687890">
        <id>Q9P2G1</id>
    </interactant>
    <interactant intactId="EBI-721550">
        <id>P22736</id>
        <label>NR4A1</label>
    </interactant>
    <organismsDiffer>false</organismsDiffer>
    <experiments>2</experiments>
</comment>
<comment type="domain">
    <text evidence="2">Members of the RBR family are atypical E3 ligases. They interact with the E2 conjugating enzyme UBE2L3 and function like HECT-type E3 enzymes: they bind E2s via the first RING domain, but require an obligate trans-thiolation step during the ubiquitin transfer, requiring a conserved cysteine residue in the second RING domain.</text>
</comment>
<comment type="similarity">
    <text evidence="12">Belongs to the RBR family.</text>
</comment>
<comment type="caution">
    <text evidence="12">Lacks one Cys residue in the IBR-type zinc finger domain that is one of the conserved features of the family.</text>
</comment>
<comment type="sequence caution" evidence="12">
    <conflict type="erroneous initiation">
        <sequence resource="EMBL-CDS" id="AAH63861"/>
    </conflict>
</comment>
<comment type="sequence caution" evidence="12">
    <conflict type="erroneous initiation">
        <sequence resource="EMBL-CDS" id="BAA91537"/>
    </conflict>
</comment>
<comment type="sequence caution" evidence="12">
    <conflict type="erroneous initiation">
        <sequence resource="EMBL-CDS" id="BAA92624"/>
    </conflict>
</comment>
<keyword id="KW-0040">ANK repeat</keyword>
<keyword id="KW-0175">Coiled coil</keyword>
<keyword id="KW-0449">Lipoprotein</keyword>
<keyword id="KW-0479">Metal-binding</keyword>
<keyword id="KW-0519">Myristate</keyword>
<keyword id="KW-0597">Phosphoprotein</keyword>
<keyword id="KW-1267">Proteomics identification</keyword>
<keyword id="KW-1185">Reference proteome</keyword>
<keyword id="KW-0677">Repeat</keyword>
<keyword id="KW-0808">Transferase</keyword>
<keyword id="KW-0833">Ubl conjugation pathway</keyword>
<keyword id="KW-0862">Zinc</keyword>
<keyword id="KW-0863">Zinc-finger</keyword>
<sequence>MGNTTTKFRKALINGDENLACQIYENNPQLKESLDPNTSYGEPYQHNTPLHYAARHGMNKILGTFLGRDGNPNKRNVHNETSMHLLCMGPQIMISEGALHPRLARPTEDDFRRADCLQMILKWKGAKLDQGEYERAAIDAVDNKKNTPLHYAAASGMKACVELLVKHGGDLFAENENKDTPCDCAEKQHHKDLALNLESQMVFSRDPEAEEIEAEYAALDKREPYEGLRPQDLRRLKDMLIVETADMLQAPLFTAEALLRAHDWDREKLLEAWMSNPENCCQRSGVQMPTPPPSGYNAWDTLPSPRTPRTTRSSVTSPDEISLSPGDLDTSLCDICMCSISVFEDPVDMPCGHDFCRGCWESFLNLKIQEGEAHNIFCPAYDCFQLVPVDIIESVVSKEMDKRYLQFDIKAFVENNPAIKWCPTPGCDRAVRLTKQGSNTSGSDTLSFPLLRAPAVDCGKGHLFCWECLGEAHEPCDCQTWKNWLQKITEMKPEELVGVSEAYEDAANCLWLLTNSKPCANCKSPIQKNEGCNHMQCAKCKYDFCWICLEEWKKHSSSTGGYYRCTRYEVIQHVEEQSKEMTVEAEKKHKRFQELDRFMHYYTRFKNHEHSYQLEQRLLKTAKEKMEQLSRALKETEGGCPDTTFIEDAVHVLLKTRRILKCSYPYGFFLEPKSTKKEIFELMQTDLEMVTEDLAQKVNRPYLRTPRHKIIKAACLVQQKRQEFLASVARGVAPADSPEAPRRSFAGGTWDWEYLGFASPEEYAEFQYRRRHRQRRRGDVHSLLSNPPDPDEPSESTLDIPEGGSSSRRPGTSVVSSASMSVLHSSSLRDYTPASRSENQDSLQALSSLDEDDPNILLAIQLSLQESGLALDEETRDFLSNEASLGAIGTSLPSRLDSVPRNTDSPRAALSSSELLELGDSLMRLGAENDPFSTDTLSSHPLSEARSDFCPSSSDPDSAGQDPNINDNLLGNIMAWFHDMNPQSIALIPPATTEISADSQLPCIKDGSEGVKDVELVLPEDSMFEDASVSEGRGTQIEENPLEENILAGEAASQAGDSGNEAANRGDGSDVSSQTPQTSSDWLEQVHLV</sequence>
<evidence type="ECO:0000250" key="1"/>
<evidence type="ECO:0000250" key="2">
    <source>
        <dbReference type="UniProtKB" id="O60260"/>
    </source>
</evidence>
<evidence type="ECO:0000250" key="3">
    <source>
        <dbReference type="UniProtKB" id="Q6ZPS6"/>
    </source>
</evidence>
<evidence type="ECO:0000255" key="4"/>
<evidence type="ECO:0000255" key="5">
    <source>
        <dbReference type="PROSITE-ProRule" id="PRU00213"/>
    </source>
</evidence>
<evidence type="ECO:0000255" key="6">
    <source>
        <dbReference type="PROSITE-ProRule" id="PRU01221"/>
    </source>
</evidence>
<evidence type="ECO:0000256" key="7">
    <source>
        <dbReference type="SAM" id="MobiDB-lite"/>
    </source>
</evidence>
<evidence type="ECO:0000269" key="8">
    <source>
    </source>
</evidence>
<evidence type="ECO:0000269" key="9">
    <source>
    </source>
</evidence>
<evidence type="ECO:0000269" key="10">
    <source>
    </source>
</evidence>
<evidence type="ECO:0000269" key="11">
    <source>
    </source>
</evidence>
<evidence type="ECO:0000305" key="12"/>
<evidence type="ECO:0007744" key="13">
    <source>
    </source>
</evidence>
<evidence type="ECO:0007744" key="14">
    <source>
    </source>
</evidence>
<evidence type="ECO:0007744" key="15">
    <source>
    </source>
</evidence>
<evidence type="ECO:0007744" key="16">
    <source>
    </source>
</evidence>
<evidence type="ECO:0007744" key="17">
    <source>
    </source>
</evidence>
<feature type="initiator methionine" description="Removed">
    <location>
        <position position="1"/>
    </location>
</feature>
<feature type="chain" id="PRO_0000066892" description="Ankyrin repeat and IBR domain-containing protein 1">
    <location>
        <begin position="2"/>
        <end position="1089"/>
    </location>
</feature>
<feature type="repeat" description="ANK 1">
    <location>
        <begin position="45"/>
        <end position="74"/>
    </location>
</feature>
<feature type="repeat" description="ANK 2">
    <location>
        <begin position="144"/>
        <end position="173"/>
    </location>
</feature>
<feature type="domain" description="UIM" evidence="5">
    <location>
        <begin position="851"/>
        <end position="870"/>
    </location>
</feature>
<feature type="zinc finger region" description="RING-type 1" evidence="6">
    <location>
        <begin position="333"/>
        <end position="383"/>
    </location>
</feature>
<feature type="zinc finger region" description="IBR-type" evidence="6">
    <location>
        <begin position="401"/>
        <end position="478"/>
    </location>
</feature>
<feature type="zinc finger region" description="RING-type 2; atypical" evidence="6">
    <location>
        <begin position="519"/>
        <end position="548"/>
    </location>
</feature>
<feature type="region of interest" description="Disordered" evidence="7">
    <location>
        <begin position="281"/>
        <end position="321"/>
    </location>
</feature>
<feature type="region of interest" description="TRIAD supradomain" evidence="6">
    <location>
        <begin position="329"/>
        <end position="569"/>
    </location>
</feature>
<feature type="region of interest" description="Disordered" evidence="7">
    <location>
        <begin position="776"/>
        <end position="821"/>
    </location>
</feature>
<feature type="region of interest" description="Disordered" evidence="7">
    <location>
        <begin position="889"/>
        <end position="912"/>
    </location>
</feature>
<feature type="region of interest" description="Disordered" evidence="7">
    <location>
        <begin position="927"/>
        <end position="964"/>
    </location>
</feature>
<feature type="region of interest" description="Disordered" evidence="7">
    <location>
        <begin position="1026"/>
        <end position="1089"/>
    </location>
</feature>
<feature type="coiled-coil region" evidence="4">
    <location>
        <begin position="575"/>
        <end position="640"/>
    </location>
</feature>
<feature type="compositionally biased region" description="Low complexity" evidence="7">
    <location>
        <begin position="303"/>
        <end position="318"/>
    </location>
</feature>
<feature type="compositionally biased region" description="Polar residues" evidence="7">
    <location>
        <begin position="931"/>
        <end position="941"/>
    </location>
</feature>
<feature type="compositionally biased region" description="Polar residues" evidence="7">
    <location>
        <begin position="1070"/>
        <end position="1082"/>
    </location>
</feature>
<feature type="active site" evidence="6">
    <location>
        <position position="532"/>
    </location>
</feature>
<feature type="binding site" evidence="6">
    <location>
        <position position="333"/>
    </location>
    <ligand>
        <name>Zn(2+)</name>
        <dbReference type="ChEBI" id="CHEBI:29105"/>
        <label>1</label>
    </ligand>
</feature>
<feature type="binding site" evidence="6">
    <location>
        <position position="336"/>
    </location>
    <ligand>
        <name>Zn(2+)</name>
        <dbReference type="ChEBI" id="CHEBI:29105"/>
        <label>1</label>
    </ligand>
</feature>
<feature type="binding site" evidence="6">
    <location>
        <position position="351"/>
    </location>
    <ligand>
        <name>Zn(2+)</name>
        <dbReference type="ChEBI" id="CHEBI:29105"/>
        <label>2</label>
    </ligand>
</feature>
<feature type="binding site" evidence="6">
    <location>
        <position position="353"/>
    </location>
    <ligand>
        <name>Zn(2+)</name>
        <dbReference type="ChEBI" id="CHEBI:29105"/>
        <label>2</label>
    </ligand>
</feature>
<feature type="binding site" evidence="6">
    <location>
        <position position="356"/>
    </location>
    <ligand>
        <name>Zn(2+)</name>
        <dbReference type="ChEBI" id="CHEBI:29105"/>
        <label>1</label>
    </ligand>
</feature>
<feature type="binding site" evidence="6">
    <location>
        <position position="359"/>
    </location>
    <ligand>
        <name>Zn(2+)</name>
        <dbReference type="ChEBI" id="CHEBI:29105"/>
        <label>1</label>
    </ligand>
</feature>
<feature type="binding site" evidence="6">
    <location>
        <position position="378"/>
    </location>
    <ligand>
        <name>Zn(2+)</name>
        <dbReference type="ChEBI" id="CHEBI:29105"/>
        <label>2</label>
    </ligand>
</feature>
<feature type="binding site" evidence="6">
    <location>
        <position position="383"/>
    </location>
    <ligand>
        <name>Zn(2+)</name>
        <dbReference type="ChEBI" id="CHEBI:29105"/>
        <label>2</label>
    </ligand>
</feature>
<feature type="binding site" evidence="6">
    <location>
        <position position="465"/>
    </location>
    <ligand>
        <name>Zn(2+)</name>
        <dbReference type="ChEBI" id="CHEBI:29105"/>
        <label>3</label>
    </ligand>
</feature>
<feature type="binding site" evidence="6">
    <location>
        <position position="468"/>
    </location>
    <ligand>
        <name>Zn(2+)</name>
        <dbReference type="ChEBI" id="CHEBI:29105"/>
        <label>3</label>
    </ligand>
</feature>
<feature type="binding site" evidence="6">
    <location>
        <position position="473"/>
    </location>
    <ligand>
        <name>Zn(2+)</name>
        <dbReference type="ChEBI" id="CHEBI:29105"/>
        <label>3</label>
    </ligand>
</feature>
<feature type="binding site" evidence="6">
    <location>
        <position position="478"/>
    </location>
    <ligand>
        <name>Zn(2+)</name>
        <dbReference type="ChEBI" id="CHEBI:29105"/>
        <label>3</label>
    </ligand>
</feature>
<feature type="binding site" evidence="6">
    <location>
        <position position="519"/>
    </location>
    <ligand>
        <name>Zn(2+)</name>
        <dbReference type="ChEBI" id="CHEBI:29105"/>
        <label>4</label>
    </ligand>
</feature>
<feature type="binding site" evidence="6">
    <location>
        <position position="522"/>
    </location>
    <ligand>
        <name>Zn(2+)</name>
        <dbReference type="ChEBI" id="CHEBI:29105"/>
        <label>4</label>
    </ligand>
</feature>
<feature type="binding site" evidence="6">
    <location>
        <position position="537"/>
    </location>
    <ligand>
        <name>Zn(2+)</name>
        <dbReference type="ChEBI" id="CHEBI:29105"/>
        <label>4</label>
    </ligand>
</feature>
<feature type="binding site" evidence="6">
    <location>
        <position position="540"/>
    </location>
    <ligand>
        <name>Zn(2+)</name>
        <dbReference type="ChEBI" id="CHEBI:29105"/>
        <label>4</label>
    </ligand>
</feature>
<feature type="binding site" evidence="6">
    <location>
        <position position="545"/>
    </location>
    <ligand>
        <name>Zn(2+)</name>
        <dbReference type="ChEBI" id="CHEBI:29105"/>
        <label>5</label>
    </ligand>
</feature>
<feature type="binding site" evidence="6">
    <location>
        <position position="548"/>
    </location>
    <ligand>
        <name>Zn(2+)</name>
        <dbReference type="ChEBI" id="CHEBI:29105"/>
        <label>5</label>
    </ligand>
</feature>
<feature type="binding site" evidence="6">
    <location>
        <position position="555"/>
    </location>
    <ligand>
        <name>Zn(2+)</name>
        <dbReference type="ChEBI" id="CHEBI:29105"/>
        <label>5</label>
    </ligand>
</feature>
<feature type="binding site" evidence="6">
    <location>
        <position position="565"/>
    </location>
    <ligand>
        <name>Zn(2+)</name>
        <dbReference type="ChEBI" id="CHEBI:29105"/>
        <label>5</label>
    </ligand>
</feature>
<feature type="modified residue" description="Phosphoserine" evidence="13 14 15 16 17">
    <location>
        <position position="737"/>
    </location>
</feature>
<feature type="modified residue" description="Phosphoserine" evidence="17">
    <location>
        <position position="884"/>
    </location>
</feature>
<feature type="modified residue" description="Phosphoserine" evidence="3">
    <location>
        <position position="911"/>
    </location>
</feature>
<feature type="lipid moiety-binding region" description="N-myristoyl glycine" evidence="11">
    <location>
        <position position="2"/>
    </location>
</feature>
<feature type="sequence variant" id="VAR_030862" description="In dbSNP:rs38794." evidence="8 9 10">
    <original>L</original>
    <variation>M</variation>
    <location>
        <position position="1016"/>
    </location>
</feature>
<feature type="sequence conflict" description="In Ref. 4; BAA91537." evidence="12" ref="4">
    <original>N</original>
    <variation>S</variation>
    <location>
        <position position="929"/>
    </location>
</feature>
<name>AKIB1_HUMAN</name>
<reference key="1">
    <citation type="journal article" date="2000" name="DNA Res.">
        <title>Prediction of the coding sequences of unidentified human genes. XVI. The complete sequences of 150 new cDNA clones from brain which code for large proteins in vitro.</title>
        <authorList>
            <person name="Nagase T."/>
            <person name="Kikuno R."/>
            <person name="Ishikawa K."/>
            <person name="Hirosawa M."/>
            <person name="Ohara O."/>
        </authorList>
    </citation>
    <scope>NUCLEOTIDE SEQUENCE [LARGE SCALE MRNA]</scope>
    <scope>VARIANT MET-1016</scope>
    <source>
        <tissue>Brain</tissue>
    </source>
</reference>
<reference key="2">
    <citation type="journal article" date="2003" name="Nature">
        <title>The DNA sequence of human chromosome 7.</title>
        <authorList>
            <person name="Hillier L.W."/>
            <person name="Fulton R.S."/>
            <person name="Fulton L.A."/>
            <person name="Graves T.A."/>
            <person name="Pepin K.H."/>
            <person name="Wagner-McPherson C."/>
            <person name="Layman D."/>
            <person name="Maas J."/>
            <person name="Jaeger S."/>
            <person name="Walker R."/>
            <person name="Wylie K."/>
            <person name="Sekhon M."/>
            <person name="Becker M.C."/>
            <person name="O'Laughlin M.D."/>
            <person name="Schaller M.E."/>
            <person name="Fewell G.A."/>
            <person name="Delehaunty K.D."/>
            <person name="Miner T.L."/>
            <person name="Nash W.E."/>
            <person name="Cordes M."/>
            <person name="Du H."/>
            <person name="Sun H."/>
            <person name="Edwards J."/>
            <person name="Bradshaw-Cordum H."/>
            <person name="Ali J."/>
            <person name="Andrews S."/>
            <person name="Isak A."/>
            <person name="Vanbrunt A."/>
            <person name="Nguyen C."/>
            <person name="Du F."/>
            <person name="Lamar B."/>
            <person name="Courtney L."/>
            <person name="Kalicki J."/>
            <person name="Ozersky P."/>
            <person name="Bielicki L."/>
            <person name="Scott K."/>
            <person name="Holmes A."/>
            <person name="Harkins R."/>
            <person name="Harris A."/>
            <person name="Strong C.M."/>
            <person name="Hou S."/>
            <person name="Tomlinson C."/>
            <person name="Dauphin-Kohlberg S."/>
            <person name="Kozlowicz-Reilly A."/>
            <person name="Leonard S."/>
            <person name="Rohlfing T."/>
            <person name="Rock S.M."/>
            <person name="Tin-Wollam A.-M."/>
            <person name="Abbott A."/>
            <person name="Minx P."/>
            <person name="Maupin R."/>
            <person name="Strowmatt C."/>
            <person name="Latreille P."/>
            <person name="Miller N."/>
            <person name="Johnson D."/>
            <person name="Murray J."/>
            <person name="Woessner J.P."/>
            <person name="Wendl M.C."/>
            <person name="Yang S.-P."/>
            <person name="Schultz B.R."/>
            <person name="Wallis J.W."/>
            <person name="Spieth J."/>
            <person name="Bieri T.A."/>
            <person name="Nelson J.O."/>
            <person name="Berkowicz N."/>
            <person name="Wohldmann P.E."/>
            <person name="Cook L.L."/>
            <person name="Hickenbotham M.T."/>
            <person name="Eldred J."/>
            <person name="Williams D."/>
            <person name="Bedell J.A."/>
            <person name="Mardis E.R."/>
            <person name="Clifton S.W."/>
            <person name="Chissoe S.L."/>
            <person name="Marra M.A."/>
            <person name="Raymond C."/>
            <person name="Haugen E."/>
            <person name="Gillett W."/>
            <person name="Zhou Y."/>
            <person name="James R."/>
            <person name="Phelps K."/>
            <person name="Iadanoto S."/>
            <person name="Bubb K."/>
            <person name="Simms E."/>
            <person name="Levy R."/>
            <person name="Clendenning J."/>
            <person name="Kaul R."/>
            <person name="Kent W.J."/>
            <person name="Furey T.S."/>
            <person name="Baertsch R.A."/>
            <person name="Brent M.R."/>
            <person name="Keibler E."/>
            <person name="Flicek P."/>
            <person name="Bork P."/>
            <person name="Suyama M."/>
            <person name="Bailey J.A."/>
            <person name="Portnoy M.E."/>
            <person name="Torrents D."/>
            <person name="Chinwalla A.T."/>
            <person name="Gish W.R."/>
            <person name="Eddy S.R."/>
            <person name="McPherson J.D."/>
            <person name="Olson M.V."/>
            <person name="Eichler E.E."/>
            <person name="Green E.D."/>
            <person name="Waterston R.H."/>
            <person name="Wilson R.K."/>
        </authorList>
    </citation>
    <scope>NUCLEOTIDE SEQUENCE [LARGE SCALE GENOMIC DNA]</scope>
</reference>
<reference key="3">
    <citation type="journal article" date="2004" name="Genome Res.">
        <title>The status, quality, and expansion of the NIH full-length cDNA project: the Mammalian Gene Collection (MGC).</title>
        <authorList>
            <consortium name="The MGC Project Team"/>
        </authorList>
    </citation>
    <scope>NUCLEOTIDE SEQUENCE [LARGE SCALE MRNA]</scope>
    <source>
        <tissue>Skin</tissue>
        <tissue>Uterus</tissue>
    </source>
</reference>
<reference key="4">
    <citation type="journal article" date="2004" name="Nat. Genet.">
        <title>Complete sequencing and characterization of 21,243 full-length human cDNAs.</title>
        <authorList>
            <person name="Ota T."/>
            <person name="Suzuki Y."/>
            <person name="Nishikawa T."/>
            <person name="Otsuki T."/>
            <person name="Sugiyama T."/>
            <person name="Irie R."/>
            <person name="Wakamatsu A."/>
            <person name="Hayashi K."/>
            <person name="Sato H."/>
            <person name="Nagai K."/>
            <person name="Kimura K."/>
            <person name="Makita H."/>
            <person name="Sekine M."/>
            <person name="Obayashi M."/>
            <person name="Nishi T."/>
            <person name="Shibahara T."/>
            <person name="Tanaka T."/>
            <person name="Ishii S."/>
            <person name="Yamamoto J."/>
            <person name="Saito K."/>
            <person name="Kawai Y."/>
            <person name="Isono Y."/>
            <person name="Nakamura Y."/>
            <person name="Nagahari K."/>
            <person name="Murakami K."/>
            <person name="Yasuda T."/>
            <person name="Iwayanagi T."/>
            <person name="Wagatsuma M."/>
            <person name="Shiratori A."/>
            <person name="Sudo H."/>
            <person name="Hosoiri T."/>
            <person name="Kaku Y."/>
            <person name="Kodaira H."/>
            <person name="Kondo H."/>
            <person name="Sugawara M."/>
            <person name="Takahashi M."/>
            <person name="Kanda K."/>
            <person name="Yokoi T."/>
            <person name="Furuya T."/>
            <person name="Kikkawa E."/>
            <person name="Omura Y."/>
            <person name="Abe K."/>
            <person name="Kamihara K."/>
            <person name="Katsuta N."/>
            <person name="Sato K."/>
            <person name="Tanikawa M."/>
            <person name="Yamazaki M."/>
            <person name="Ninomiya K."/>
            <person name="Ishibashi T."/>
            <person name="Yamashita H."/>
            <person name="Murakawa K."/>
            <person name="Fujimori K."/>
            <person name="Tanai H."/>
            <person name="Kimata M."/>
            <person name="Watanabe M."/>
            <person name="Hiraoka S."/>
            <person name="Chiba Y."/>
            <person name="Ishida S."/>
            <person name="Ono Y."/>
            <person name="Takiguchi S."/>
            <person name="Watanabe S."/>
            <person name="Yosida M."/>
            <person name="Hotuta T."/>
            <person name="Kusano J."/>
            <person name="Kanehori K."/>
            <person name="Takahashi-Fujii A."/>
            <person name="Hara H."/>
            <person name="Tanase T.-O."/>
            <person name="Nomura Y."/>
            <person name="Togiya S."/>
            <person name="Komai F."/>
            <person name="Hara R."/>
            <person name="Takeuchi K."/>
            <person name="Arita M."/>
            <person name="Imose N."/>
            <person name="Musashino K."/>
            <person name="Yuuki H."/>
            <person name="Oshima A."/>
            <person name="Sasaki N."/>
            <person name="Aotsuka S."/>
            <person name="Yoshikawa Y."/>
            <person name="Matsunawa H."/>
            <person name="Ichihara T."/>
            <person name="Shiohata N."/>
            <person name="Sano S."/>
            <person name="Moriya S."/>
            <person name="Momiyama H."/>
            <person name="Satoh N."/>
            <person name="Takami S."/>
            <person name="Terashima Y."/>
            <person name="Suzuki O."/>
            <person name="Nakagawa S."/>
            <person name="Senoh A."/>
            <person name="Mizoguchi H."/>
            <person name="Goto Y."/>
            <person name="Shimizu F."/>
            <person name="Wakebe H."/>
            <person name="Hishigaki H."/>
            <person name="Watanabe T."/>
            <person name="Sugiyama A."/>
            <person name="Takemoto M."/>
            <person name="Kawakami B."/>
            <person name="Yamazaki M."/>
            <person name="Watanabe K."/>
            <person name="Kumagai A."/>
            <person name="Itakura S."/>
            <person name="Fukuzumi Y."/>
            <person name="Fujimori Y."/>
            <person name="Komiyama M."/>
            <person name="Tashiro H."/>
            <person name="Tanigami A."/>
            <person name="Fujiwara T."/>
            <person name="Ono T."/>
            <person name="Yamada K."/>
            <person name="Fujii Y."/>
            <person name="Ozaki K."/>
            <person name="Hirao M."/>
            <person name="Ohmori Y."/>
            <person name="Kawabata A."/>
            <person name="Hikiji T."/>
            <person name="Kobatake N."/>
            <person name="Inagaki H."/>
            <person name="Ikema Y."/>
            <person name="Okamoto S."/>
            <person name="Okitani R."/>
            <person name="Kawakami T."/>
            <person name="Noguchi S."/>
            <person name="Itoh T."/>
            <person name="Shigeta K."/>
            <person name="Senba T."/>
            <person name="Matsumura K."/>
            <person name="Nakajima Y."/>
            <person name="Mizuno T."/>
            <person name="Morinaga M."/>
            <person name="Sasaki M."/>
            <person name="Togashi T."/>
            <person name="Oyama M."/>
            <person name="Hata H."/>
            <person name="Watanabe M."/>
            <person name="Komatsu T."/>
            <person name="Mizushima-Sugano J."/>
            <person name="Satoh T."/>
            <person name="Shirai Y."/>
            <person name="Takahashi Y."/>
            <person name="Nakagawa K."/>
            <person name="Okumura K."/>
            <person name="Nagase T."/>
            <person name="Nomura N."/>
            <person name="Kikuchi H."/>
            <person name="Masuho Y."/>
            <person name="Yamashita R."/>
            <person name="Nakai K."/>
            <person name="Yada T."/>
            <person name="Nakamura Y."/>
            <person name="Ohara O."/>
            <person name="Isogai T."/>
            <person name="Sugano S."/>
        </authorList>
    </citation>
    <scope>NUCLEOTIDE SEQUENCE [LARGE SCALE MRNA] OF 540-1089</scope>
    <scope>VARIANT MET-1016</scope>
</reference>
<reference key="5">
    <citation type="journal article" date="2007" name="BMC Genomics">
        <title>The full-ORF clone resource of the German cDNA consortium.</title>
        <authorList>
            <person name="Bechtel S."/>
            <person name="Rosenfelder H."/>
            <person name="Duda A."/>
            <person name="Schmidt C.P."/>
            <person name="Ernst U."/>
            <person name="Wellenreuther R."/>
            <person name="Mehrle A."/>
            <person name="Schuster C."/>
            <person name="Bahr A."/>
            <person name="Bloecker H."/>
            <person name="Heubner D."/>
            <person name="Hoerlein A."/>
            <person name="Michel G."/>
            <person name="Wedler H."/>
            <person name="Koehrer K."/>
            <person name="Ottenwaelder B."/>
            <person name="Poustka A."/>
            <person name="Wiemann S."/>
            <person name="Schupp I."/>
        </authorList>
    </citation>
    <scope>NUCLEOTIDE SEQUENCE [LARGE SCALE MRNA] OF 549-1089</scope>
    <scope>VARIANT MET-1016</scope>
    <source>
        <tissue>Testis</tissue>
    </source>
</reference>
<reference key="6">
    <citation type="journal article" date="2006" name="Cell">
        <title>Global, in vivo, and site-specific phosphorylation dynamics in signaling networks.</title>
        <authorList>
            <person name="Olsen J.V."/>
            <person name="Blagoev B."/>
            <person name="Gnad F."/>
            <person name="Macek B."/>
            <person name="Kumar C."/>
            <person name="Mortensen P."/>
            <person name="Mann M."/>
        </authorList>
    </citation>
    <scope>PHOSPHORYLATION [LARGE SCALE ANALYSIS] AT SER-737</scope>
    <scope>IDENTIFICATION BY MASS SPECTROMETRY [LARGE SCALE ANALYSIS]</scope>
    <source>
        <tissue>Cervix carcinoma</tissue>
    </source>
</reference>
<reference key="7">
    <citation type="journal article" date="2008" name="J. Proteome Res.">
        <title>Phosphoproteome of resting human platelets.</title>
        <authorList>
            <person name="Zahedi R.P."/>
            <person name="Lewandrowski U."/>
            <person name="Wiesner J."/>
            <person name="Wortelkamp S."/>
            <person name="Moebius J."/>
            <person name="Schuetz C."/>
            <person name="Walter U."/>
            <person name="Gambaryan S."/>
            <person name="Sickmann A."/>
        </authorList>
    </citation>
    <scope>PHOSPHORYLATION [LARGE SCALE ANALYSIS] AT SER-737</scope>
    <scope>IDENTIFICATION BY MASS SPECTROMETRY [LARGE SCALE ANALYSIS]</scope>
    <source>
        <tissue>Platelet</tissue>
    </source>
</reference>
<reference key="8">
    <citation type="journal article" date="2008" name="Mol. Cell">
        <title>Kinase-selective enrichment enables quantitative phosphoproteomics of the kinome across the cell cycle.</title>
        <authorList>
            <person name="Daub H."/>
            <person name="Olsen J.V."/>
            <person name="Bairlein M."/>
            <person name="Gnad F."/>
            <person name="Oppermann F.S."/>
            <person name="Korner R."/>
            <person name="Greff Z."/>
            <person name="Keri G."/>
            <person name="Stemmann O."/>
            <person name="Mann M."/>
        </authorList>
    </citation>
    <scope>PHOSPHORYLATION [LARGE SCALE ANALYSIS] AT SER-737</scope>
    <scope>IDENTIFICATION BY MASS SPECTROMETRY [LARGE SCALE ANALYSIS]</scope>
    <source>
        <tissue>Cervix carcinoma</tissue>
    </source>
</reference>
<reference key="9">
    <citation type="journal article" date="2008" name="Proc. Natl. Acad. Sci. U.S.A.">
        <title>A quantitative atlas of mitotic phosphorylation.</title>
        <authorList>
            <person name="Dephoure N."/>
            <person name="Zhou C."/>
            <person name="Villen J."/>
            <person name="Beausoleil S.A."/>
            <person name="Bakalarski C.E."/>
            <person name="Elledge S.J."/>
            <person name="Gygi S.P."/>
        </authorList>
    </citation>
    <scope>IDENTIFICATION BY MASS SPECTROMETRY [LARGE SCALE ANALYSIS]</scope>
    <source>
        <tissue>Cervix carcinoma</tissue>
    </source>
</reference>
<reference key="10">
    <citation type="journal article" date="2010" name="Proteomics">
        <title>Strategy for comprehensive identification of human N-myristoylated proteins using an insect cell-free protein synthesis system.</title>
        <authorList>
            <person name="Suzuki T."/>
            <person name="Moriya K."/>
            <person name="Nagatoshi K."/>
            <person name="Ota Y."/>
            <person name="Ezure T."/>
            <person name="Ando E."/>
            <person name="Tsunasawa S."/>
            <person name="Utsumi T."/>
        </authorList>
    </citation>
    <scope>MYRISTOYLATION AT GLY-2</scope>
</reference>
<reference key="11">
    <citation type="journal article" date="2013" name="J. Proteome Res.">
        <title>Toward a comprehensive characterization of a human cancer cell phosphoproteome.</title>
        <authorList>
            <person name="Zhou H."/>
            <person name="Di Palma S."/>
            <person name="Preisinger C."/>
            <person name="Peng M."/>
            <person name="Polat A.N."/>
            <person name="Heck A.J."/>
            <person name="Mohammed S."/>
        </authorList>
    </citation>
    <scope>PHOSPHORYLATION [LARGE SCALE ANALYSIS] AT SER-737</scope>
    <scope>IDENTIFICATION BY MASS SPECTROMETRY [LARGE SCALE ANALYSIS]</scope>
    <source>
        <tissue>Cervix carcinoma</tissue>
        <tissue>Erythroleukemia</tissue>
    </source>
</reference>
<reference key="12">
    <citation type="journal article" date="2014" name="J. Proteomics">
        <title>An enzyme assisted RP-RPLC approach for in-depth analysis of human liver phosphoproteome.</title>
        <authorList>
            <person name="Bian Y."/>
            <person name="Song C."/>
            <person name="Cheng K."/>
            <person name="Dong M."/>
            <person name="Wang F."/>
            <person name="Huang J."/>
            <person name="Sun D."/>
            <person name="Wang L."/>
            <person name="Ye M."/>
            <person name="Zou H."/>
        </authorList>
    </citation>
    <scope>PHOSPHORYLATION [LARGE SCALE ANALYSIS] AT SER-737 AND SER-884</scope>
    <scope>IDENTIFICATION BY MASS SPECTROMETRY [LARGE SCALE ANALYSIS]</scope>
    <source>
        <tissue>Liver</tissue>
    </source>
</reference>